<keyword id="KW-0167">Capsid protein</keyword>
<keyword id="KW-0426">Late protein</keyword>
<keyword id="KW-1185">Reference proteome</keyword>
<keyword id="KW-0946">Virion</keyword>
<protein>
    <recommendedName>
        <fullName evidence="1">Major capsid protein</fullName>
    </recommendedName>
    <alternativeName>
        <fullName evidence="2">Major head protein</fullName>
    </alternativeName>
</protein>
<name>CAPSD_BPSAV</name>
<accession>E1XTG1</accession>
<feature type="chain" id="PRO_0000432346" description="Major capsid protein">
    <location>
        <begin position="1"/>
        <end position="440"/>
    </location>
</feature>
<evidence type="ECO:0000250" key="1">
    <source>
        <dbReference type="UniProtKB" id="P04535"/>
    </source>
</evidence>
<evidence type="ECO:0000305" key="2"/>
<evidence type="ECO:0000312" key="3">
    <source>
        <dbReference type="EMBL" id="CBW38020.1"/>
    </source>
</evidence>
<sequence length="440" mass="48002">MTKKLVTEEMRKQWLPVLQKESEAIQPLSAENVTIRLMQNQAEWNAKNLGESDAPGSVNSTVGKWQPVLIDMAKRLAPINIAMDFFGVQPLSGPDGQIFALRARQGVGDGSTTAQARKELFMNEADSGYSGDGTVQAGDPSGFSQAEIEGSGSVVTTIGKGMPSTDAELLGTTTNPWARVGITVQKATVTAKSRGLYADYSHELRQDMMAIHGEDVDNILSDVMVTEIQAEMNREFIRTMNFSAVRFKKFGTNGVVDIAQDISGRWALEKWKFLTFMLEVEANGIGVDTRRGKGNRVLCSPNVASALAMSGMLDYAPVLQENTKLAVDPTGQTFAGVLSNGMRVYVDPYAVAEYITLAYKGATALDAGIFFAPYVPLEMYRTQGETTFSPRMAFKTRYGICANPFVQIPANQDPQVYVTADGIAQDSNPYFRKGLIKSLF</sequence>
<dbReference type="EMBL" id="FQ312032">
    <property type="protein sequence ID" value="CBW38020.1"/>
    <property type="molecule type" value="Genomic_DNA"/>
</dbReference>
<dbReference type="SMR" id="E1XTG1"/>
<dbReference type="Proteomes" id="UP000000339">
    <property type="component" value="Segment"/>
</dbReference>
<dbReference type="GO" id="GO:0019028">
    <property type="term" value="C:viral capsid"/>
    <property type="evidence" value="ECO:0007669"/>
    <property type="project" value="UniProtKB-KW"/>
</dbReference>
<dbReference type="Gene3D" id="3.30.2320.40">
    <property type="match status" value="1"/>
</dbReference>
<dbReference type="InterPro" id="IPR010762">
    <property type="entry name" value="Gp23/Gp24_T4-like"/>
</dbReference>
<dbReference type="Pfam" id="PF07068">
    <property type="entry name" value="Gp23"/>
    <property type="match status" value="1"/>
</dbReference>
<reference key="1">
    <citation type="journal article" date="2010" name="J. Bacteriol.">
        <title>A conserved acetyl esterase domain targets diverse bacteriophages to the Vi capsular receptor of Salmonella enterica serovar Typhi.</title>
        <authorList>
            <person name="Pickard D."/>
            <person name="Toribio A.L."/>
            <person name="Petty N.K."/>
            <person name="van Tonder A."/>
            <person name="Yu L."/>
            <person name="Goulding D."/>
            <person name="Barrell B."/>
            <person name="Rance R."/>
            <person name="Harris D."/>
            <person name="Wetter M."/>
            <person name="Wain J."/>
            <person name="Choudhary J."/>
            <person name="Thomson N."/>
            <person name="Dougan G."/>
        </authorList>
    </citation>
    <scope>NUCLEOTIDE SEQUENCE [LARGE SCALE GENOMIC DNA]</scope>
</reference>
<comment type="function">
    <text evidence="1">Major capsid protein that self-associates to form the icosahedral capsid.</text>
</comment>
<comment type="subcellular location">
    <subcellularLocation>
        <location evidence="1">Virion</location>
    </subcellularLocation>
    <text evidence="1">Forms the capsid icosahedric shell.</text>
</comment>
<comment type="similarity">
    <text evidence="2">Belongs to the T4 phage major capsid protein family.</text>
</comment>
<gene>
    <name evidence="3" type="ORF">Vi01_152c</name>
</gene>
<organismHost>
    <name type="scientific">Salmonella typhi</name>
    <dbReference type="NCBI Taxonomy" id="90370"/>
</organismHost>
<organism>
    <name type="scientific">Salmonella phage ViI</name>
    <dbReference type="NCBI Taxonomy" id="1987993"/>
    <lineage>
        <taxon>Viruses</taxon>
        <taxon>Duplodnaviria</taxon>
        <taxon>Heunggongvirae</taxon>
        <taxon>Uroviricota</taxon>
        <taxon>Caudoviricetes</taxon>
        <taxon>Ackermannviridae</taxon>
        <taxon>Cvivirinae</taxon>
        <taxon>Kuttervirus</taxon>
    </lineage>
</organism>
<proteinExistence type="inferred from homology"/>